<dbReference type="EC" id="3.6.5.3" evidence="2"/>
<dbReference type="EMBL" id="CP001175">
    <property type="protein sequence ID" value="ACK41212.1"/>
    <property type="molecule type" value="Genomic_DNA"/>
</dbReference>
<dbReference type="RefSeq" id="WP_003739865.1">
    <property type="nucleotide sequence ID" value="NC_011660.1"/>
</dbReference>
<dbReference type="SMR" id="B8DAY7"/>
<dbReference type="GeneID" id="93236075"/>
<dbReference type="KEGG" id="lmh:LMHCC_2881"/>
<dbReference type="HOGENOM" id="CLU_007265_0_0_9"/>
<dbReference type="GO" id="GO:0005829">
    <property type="term" value="C:cytosol"/>
    <property type="evidence" value="ECO:0007669"/>
    <property type="project" value="TreeGrafter"/>
</dbReference>
<dbReference type="GO" id="GO:0005525">
    <property type="term" value="F:GTP binding"/>
    <property type="evidence" value="ECO:0007669"/>
    <property type="project" value="UniProtKB-UniRule"/>
</dbReference>
<dbReference type="GO" id="GO:0003924">
    <property type="term" value="F:GTPase activity"/>
    <property type="evidence" value="ECO:0007669"/>
    <property type="project" value="InterPro"/>
</dbReference>
<dbReference type="GO" id="GO:0003746">
    <property type="term" value="F:translation elongation factor activity"/>
    <property type="evidence" value="ECO:0007669"/>
    <property type="project" value="UniProtKB-UniRule"/>
</dbReference>
<dbReference type="CDD" id="cd01884">
    <property type="entry name" value="EF_Tu"/>
    <property type="match status" value="1"/>
</dbReference>
<dbReference type="CDD" id="cd03697">
    <property type="entry name" value="EFTU_II"/>
    <property type="match status" value="1"/>
</dbReference>
<dbReference type="CDD" id="cd03707">
    <property type="entry name" value="EFTU_III"/>
    <property type="match status" value="1"/>
</dbReference>
<dbReference type="FunFam" id="2.40.30.10:FF:000001">
    <property type="entry name" value="Elongation factor Tu"/>
    <property type="match status" value="1"/>
</dbReference>
<dbReference type="FunFam" id="3.40.50.300:FF:000003">
    <property type="entry name" value="Elongation factor Tu"/>
    <property type="match status" value="1"/>
</dbReference>
<dbReference type="Gene3D" id="3.40.50.300">
    <property type="entry name" value="P-loop containing nucleotide triphosphate hydrolases"/>
    <property type="match status" value="1"/>
</dbReference>
<dbReference type="Gene3D" id="2.40.30.10">
    <property type="entry name" value="Translation factors"/>
    <property type="match status" value="2"/>
</dbReference>
<dbReference type="HAMAP" id="MF_00118_B">
    <property type="entry name" value="EF_Tu_B"/>
    <property type="match status" value="1"/>
</dbReference>
<dbReference type="InterPro" id="IPR041709">
    <property type="entry name" value="EF-Tu_GTP-bd"/>
</dbReference>
<dbReference type="InterPro" id="IPR050055">
    <property type="entry name" value="EF-Tu_GTPase"/>
</dbReference>
<dbReference type="InterPro" id="IPR004161">
    <property type="entry name" value="EFTu-like_2"/>
</dbReference>
<dbReference type="InterPro" id="IPR033720">
    <property type="entry name" value="EFTU_2"/>
</dbReference>
<dbReference type="InterPro" id="IPR031157">
    <property type="entry name" value="G_TR_CS"/>
</dbReference>
<dbReference type="InterPro" id="IPR027417">
    <property type="entry name" value="P-loop_NTPase"/>
</dbReference>
<dbReference type="InterPro" id="IPR005225">
    <property type="entry name" value="Small_GTP-bd"/>
</dbReference>
<dbReference type="InterPro" id="IPR000795">
    <property type="entry name" value="T_Tr_GTP-bd_dom"/>
</dbReference>
<dbReference type="InterPro" id="IPR009000">
    <property type="entry name" value="Transl_B-barrel_sf"/>
</dbReference>
<dbReference type="InterPro" id="IPR009001">
    <property type="entry name" value="Transl_elong_EF1A/Init_IF2_C"/>
</dbReference>
<dbReference type="InterPro" id="IPR004541">
    <property type="entry name" value="Transl_elong_EFTu/EF1A_bac/org"/>
</dbReference>
<dbReference type="InterPro" id="IPR004160">
    <property type="entry name" value="Transl_elong_EFTu/EF1A_C"/>
</dbReference>
<dbReference type="NCBIfam" id="TIGR00485">
    <property type="entry name" value="EF-Tu"/>
    <property type="match status" value="1"/>
</dbReference>
<dbReference type="NCBIfam" id="NF000766">
    <property type="entry name" value="PRK00049.1"/>
    <property type="match status" value="1"/>
</dbReference>
<dbReference type="NCBIfam" id="NF009372">
    <property type="entry name" value="PRK12735.1"/>
    <property type="match status" value="1"/>
</dbReference>
<dbReference type="NCBIfam" id="NF009373">
    <property type="entry name" value="PRK12736.1"/>
    <property type="match status" value="1"/>
</dbReference>
<dbReference type="NCBIfam" id="TIGR00231">
    <property type="entry name" value="small_GTP"/>
    <property type="match status" value="1"/>
</dbReference>
<dbReference type="PANTHER" id="PTHR43721:SF22">
    <property type="entry name" value="ELONGATION FACTOR TU, MITOCHONDRIAL"/>
    <property type="match status" value="1"/>
</dbReference>
<dbReference type="PANTHER" id="PTHR43721">
    <property type="entry name" value="ELONGATION FACTOR TU-RELATED"/>
    <property type="match status" value="1"/>
</dbReference>
<dbReference type="Pfam" id="PF00009">
    <property type="entry name" value="GTP_EFTU"/>
    <property type="match status" value="1"/>
</dbReference>
<dbReference type="Pfam" id="PF03144">
    <property type="entry name" value="GTP_EFTU_D2"/>
    <property type="match status" value="1"/>
</dbReference>
<dbReference type="Pfam" id="PF03143">
    <property type="entry name" value="GTP_EFTU_D3"/>
    <property type="match status" value="1"/>
</dbReference>
<dbReference type="PRINTS" id="PR00315">
    <property type="entry name" value="ELONGATNFCT"/>
</dbReference>
<dbReference type="SUPFAM" id="SSF50465">
    <property type="entry name" value="EF-Tu/eEF-1alpha/eIF2-gamma C-terminal domain"/>
    <property type="match status" value="1"/>
</dbReference>
<dbReference type="SUPFAM" id="SSF52540">
    <property type="entry name" value="P-loop containing nucleoside triphosphate hydrolases"/>
    <property type="match status" value="1"/>
</dbReference>
<dbReference type="SUPFAM" id="SSF50447">
    <property type="entry name" value="Translation proteins"/>
    <property type="match status" value="1"/>
</dbReference>
<dbReference type="PROSITE" id="PS00301">
    <property type="entry name" value="G_TR_1"/>
    <property type="match status" value="1"/>
</dbReference>
<dbReference type="PROSITE" id="PS51722">
    <property type="entry name" value="G_TR_2"/>
    <property type="match status" value="1"/>
</dbReference>
<comment type="function">
    <text evidence="2">GTP hydrolase that promotes the GTP-dependent binding of aminoacyl-tRNA to the A-site of ribosomes during protein biosynthesis.</text>
</comment>
<comment type="catalytic activity">
    <reaction evidence="2">
        <text>GTP + H2O = GDP + phosphate + H(+)</text>
        <dbReference type="Rhea" id="RHEA:19669"/>
        <dbReference type="ChEBI" id="CHEBI:15377"/>
        <dbReference type="ChEBI" id="CHEBI:15378"/>
        <dbReference type="ChEBI" id="CHEBI:37565"/>
        <dbReference type="ChEBI" id="CHEBI:43474"/>
        <dbReference type="ChEBI" id="CHEBI:58189"/>
        <dbReference type="EC" id="3.6.5.3"/>
    </reaction>
    <physiologicalReaction direction="left-to-right" evidence="2">
        <dbReference type="Rhea" id="RHEA:19670"/>
    </physiologicalReaction>
</comment>
<comment type="subunit">
    <text evidence="2">Monomer.</text>
</comment>
<comment type="subcellular location">
    <subcellularLocation>
        <location evidence="2">Cytoplasm</location>
    </subcellularLocation>
</comment>
<comment type="similarity">
    <text evidence="2">Belongs to the TRAFAC class translation factor GTPase superfamily. Classic translation factor GTPase family. EF-Tu/EF-1A subfamily.</text>
</comment>
<protein>
    <recommendedName>
        <fullName evidence="2">Elongation factor Tu</fullName>
        <shortName evidence="2">EF-Tu</shortName>
        <ecNumber evidence="2">3.6.5.3</ecNumber>
    </recommendedName>
</protein>
<organism>
    <name type="scientific">Listeria monocytogenes serotype 4a (strain HCC23)</name>
    <dbReference type="NCBI Taxonomy" id="552536"/>
    <lineage>
        <taxon>Bacteria</taxon>
        <taxon>Bacillati</taxon>
        <taxon>Bacillota</taxon>
        <taxon>Bacilli</taxon>
        <taxon>Bacillales</taxon>
        <taxon>Listeriaceae</taxon>
        <taxon>Listeria</taxon>
    </lineage>
</organism>
<keyword id="KW-0963">Cytoplasm</keyword>
<keyword id="KW-0251">Elongation factor</keyword>
<keyword id="KW-0342">GTP-binding</keyword>
<keyword id="KW-0378">Hydrolase</keyword>
<keyword id="KW-0460">Magnesium</keyword>
<keyword id="KW-0479">Metal-binding</keyword>
<keyword id="KW-0547">Nucleotide-binding</keyword>
<keyword id="KW-0648">Protein biosynthesis</keyword>
<reference key="1">
    <citation type="journal article" date="2011" name="J. Bacteriol.">
        <title>Genome sequence of lineage III Listeria monocytogenes strain HCC23.</title>
        <authorList>
            <person name="Steele C.L."/>
            <person name="Donaldson J.R."/>
            <person name="Paul D."/>
            <person name="Banes M.M."/>
            <person name="Arick T."/>
            <person name="Bridges S.M."/>
            <person name="Lawrence M.L."/>
        </authorList>
    </citation>
    <scope>NUCLEOTIDE SEQUENCE [LARGE SCALE GENOMIC DNA]</scope>
    <source>
        <strain>HCC23</strain>
    </source>
</reference>
<sequence>MAKEKFDRSKPHVNIGTIGHVDHGKTTLTAAITTVLAKKGFADAQAYDQIDGAPEERERGITISTAHVEYQTDNRHYAHVDCPGHADYVKNMITGAAQMDGAILVVSAADGPMPQTREHILLSRQVGVPYIVVFMNKCDMVDDEELLELVEMEIRDLLTEYEFPGDDIPVIKGSALKALQGEADWEAKIDELMEAVDSYIPTPERDTDKPFMMPVEDVFSITGRGTVATGRVERGQVKVGDEVEVIGIEEESKKVVVTGVEMFRKLLDYAEAGDNIGALLRGVAREDIQRGQVLAKPGSITPHTNFKAETYVLTKEEGGRHTPFFNNYRPQFYFRTTDVTGIVTLPEGTEMVMPGDNIELAVELIAPIAIEDGTKFSIREGGRTVGAGVVSNISK</sequence>
<proteinExistence type="inferred from homology"/>
<accession>B8DAY7</accession>
<gene>
    <name evidence="2" type="primary">tuf</name>
    <name type="ordered locus">LMHCC_2881</name>
</gene>
<evidence type="ECO:0000250" key="1"/>
<evidence type="ECO:0000255" key="2">
    <source>
        <dbReference type="HAMAP-Rule" id="MF_00118"/>
    </source>
</evidence>
<feature type="chain" id="PRO_1000201404" description="Elongation factor Tu">
    <location>
        <begin position="1"/>
        <end position="395"/>
    </location>
</feature>
<feature type="domain" description="tr-type G">
    <location>
        <begin position="10"/>
        <end position="204"/>
    </location>
</feature>
<feature type="region of interest" description="G1" evidence="1">
    <location>
        <begin position="19"/>
        <end position="26"/>
    </location>
</feature>
<feature type="region of interest" description="G2" evidence="1">
    <location>
        <begin position="60"/>
        <end position="64"/>
    </location>
</feature>
<feature type="region of interest" description="G3" evidence="1">
    <location>
        <begin position="81"/>
        <end position="84"/>
    </location>
</feature>
<feature type="region of interest" description="G4" evidence="1">
    <location>
        <begin position="136"/>
        <end position="139"/>
    </location>
</feature>
<feature type="region of interest" description="G5" evidence="1">
    <location>
        <begin position="174"/>
        <end position="176"/>
    </location>
</feature>
<feature type="binding site" evidence="2">
    <location>
        <begin position="19"/>
        <end position="26"/>
    </location>
    <ligand>
        <name>GTP</name>
        <dbReference type="ChEBI" id="CHEBI:37565"/>
    </ligand>
</feature>
<feature type="binding site" evidence="2">
    <location>
        <position position="26"/>
    </location>
    <ligand>
        <name>Mg(2+)</name>
        <dbReference type="ChEBI" id="CHEBI:18420"/>
    </ligand>
</feature>
<feature type="binding site" evidence="2">
    <location>
        <begin position="81"/>
        <end position="85"/>
    </location>
    <ligand>
        <name>GTP</name>
        <dbReference type="ChEBI" id="CHEBI:37565"/>
    </ligand>
</feature>
<feature type="binding site" evidence="2">
    <location>
        <begin position="136"/>
        <end position="139"/>
    </location>
    <ligand>
        <name>GTP</name>
        <dbReference type="ChEBI" id="CHEBI:37565"/>
    </ligand>
</feature>
<name>EFTU_LISMH</name>